<accession>O31630</accession>
<gene>
    <name type="primary">yjcH</name>
    <name type="ordered locus">BSU11860</name>
</gene>
<keyword id="KW-1185">Reference proteome</keyword>
<organism>
    <name type="scientific">Bacillus subtilis (strain 168)</name>
    <dbReference type="NCBI Taxonomy" id="224308"/>
    <lineage>
        <taxon>Bacteria</taxon>
        <taxon>Bacillati</taxon>
        <taxon>Bacillota</taxon>
        <taxon>Bacilli</taxon>
        <taxon>Bacillales</taxon>
        <taxon>Bacillaceae</taxon>
        <taxon>Bacillus</taxon>
    </lineage>
</organism>
<dbReference type="EMBL" id="AL009126">
    <property type="protein sequence ID" value="CAB13043.1"/>
    <property type="molecule type" value="Genomic_DNA"/>
</dbReference>
<dbReference type="PIR" id="H69846">
    <property type="entry name" value="H69846"/>
</dbReference>
<dbReference type="RefSeq" id="NP_389068.1">
    <property type="nucleotide sequence ID" value="NC_000964.3"/>
</dbReference>
<dbReference type="RefSeq" id="WP_003245358.1">
    <property type="nucleotide sequence ID" value="NZ_OZ025638.1"/>
</dbReference>
<dbReference type="SMR" id="O31630"/>
<dbReference type="FunCoup" id="O31630">
    <property type="interactions" value="4"/>
</dbReference>
<dbReference type="STRING" id="224308.BSU11860"/>
<dbReference type="ESTHER" id="bacsu-YJCH">
    <property type="family name" value="A85-IroE-IroD-Fes-Yiel"/>
</dbReference>
<dbReference type="MEROPS" id="S09.B07"/>
<dbReference type="PaxDb" id="224308-BSU11860"/>
<dbReference type="EnsemblBacteria" id="CAB13043">
    <property type="protein sequence ID" value="CAB13043"/>
    <property type="gene ID" value="BSU_11860"/>
</dbReference>
<dbReference type="GeneID" id="936425"/>
<dbReference type="KEGG" id="bsu:BSU11860"/>
<dbReference type="PATRIC" id="fig|224308.179.peg.1277"/>
<dbReference type="eggNOG" id="COG2382">
    <property type="taxonomic scope" value="Bacteria"/>
</dbReference>
<dbReference type="InParanoid" id="O31630"/>
<dbReference type="OrthoDB" id="9803578at2"/>
<dbReference type="PhylomeDB" id="O31630"/>
<dbReference type="BioCyc" id="BSUB:BSU11860-MONOMER"/>
<dbReference type="Proteomes" id="UP000001570">
    <property type="component" value="Chromosome"/>
</dbReference>
<dbReference type="Gene3D" id="3.40.50.1820">
    <property type="entry name" value="alpha/beta hydrolase"/>
    <property type="match status" value="1"/>
</dbReference>
<dbReference type="InterPro" id="IPR029058">
    <property type="entry name" value="AB_hydrolase_fold"/>
</dbReference>
<dbReference type="InterPro" id="IPR000801">
    <property type="entry name" value="Esterase-like"/>
</dbReference>
<dbReference type="InterPro" id="IPR050583">
    <property type="entry name" value="Mycobacterial_A85_antigen"/>
</dbReference>
<dbReference type="PANTHER" id="PTHR48098">
    <property type="entry name" value="ENTEROCHELIN ESTERASE-RELATED"/>
    <property type="match status" value="1"/>
</dbReference>
<dbReference type="PANTHER" id="PTHR48098:SF3">
    <property type="entry name" value="IRON(III) ENTEROBACTIN ESTERASE"/>
    <property type="match status" value="1"/>
</dbReference>
<dbReference type="Pfam" id="PF00756">
    <property type="entry name" value="Esterase"/>
    <property type="match status" value="1"/>
</dbReference>
<dbReference type="SUPFAM" id="SSF53474">
    <property type="entry name" value="alpha/beta-Hydrolases"/>
    <property type="match status" value="1"/>
</dbReference>
<protein>
    <recommendedName>
        <fullName>Uncharacterized protein YjcH</fullName>
    </recommendedName>
</protein>
<name>YJCH_BACSU</name>
<sequence>MAPKNGTVQEKKFFSKELNEEMTLLVYLPSNYSPLYKYHVIIAQDGHDYFRLGRIGRQVEELLSKREIDRSIIIGVPYKDVKERRNTYHPEGSKFSAYKRFIAHELVPFADDEYPTYQIGYGRTLIGDSLGATVSLMTALDYPNMFGNIIMQSPYVDKHVLEAVKQSDDIKHLSIYHQIGTKETDVHTTDGNILDFTEPNRELKQLLEKKLSDYDFEPFDGDHKWTYWQPLITPALKKML</sequence>
<proteinExistence type="predicted"/>
<feature type="chain" id="PRO_0000390304" description="Uncharacterized protein YjcH">
    <location>
        <begin position="1"/>
        <end position="240"/>
    </location>
</feature>
<reference key="1">
    <citation type="journal article" date="1997" name="Nature">
        <title>The complete genome sequence of the Gram-positive bacterium Bacillus subtilis.</title>
        <authorList>
            <person name="Kunst F."/>
            <person name="Ogasawara N."/>
            <person name="Moszer I."/>
            <person name="Albertini A.M."/>
            <person name="Alloni G."/>
            <person name="Azevedo V."/>
            <person name="Bertero M.G."/>
            <person name="Bessieres P."/>
            <person name="Bolotin A."/>
            <person name="Borchert S."/>
            <person name="Borriss R."/>
            <person name="Boursier L."/>
            <person name="Brans A."/>
            <person name="Braun M."/>
            <person name="Brignell S.C."/>
            <person name="Bron S."/>
            <person name="Brouillet S."/>
            <person name="Bruschi C.V."/>
            <person name="Caldwell B."/>
            <person name="Capuano V."/>
            <person name="Carter N.M."/>
            <person name="Choi S.-K."/>
            <person name="Codani J.-J."/>
            <person name="Connerton I.F."/>
            <person name="Cummings N.J."/>
            <person name="Daniel R.A."/>
            <person name="Denizot F."/>
            <person name="Devine K.M."/>
            <person name="Duesterhoeft A."/>
            <person name="Ehrlich S.D."/>
            <person name="Emmerson P.T."/>
            <person name="Entian K.-D."/>
            <person name="Errington J."/>
            <person name="Fabret C."/>
            <person name="Ferrari E."/>
            <person name="Foulger D."/>
            <person name="Fritz C."/>
            <person name="Fujita M."/>
            <person name="Fujita Y."/>
            <person name="Fuma S."/>
            <person name="Galizzi A."/>
            <person name="Galleron N."/>
            <person name="Ghim S.-Y."/>
            <person name="Glaser P."/>
            <person name="Goffeau A."/>
            <person name="Golightly E.J."/>
            <person name="Grandi G."/>
            <person name="Guiseppi G."/>
            <person name="Guy B.J."/>
            <person name="Haga K."/>
            <person name="Haiech J."/>
            <person name="Harwood C.R."/>
            <person name="Henaut A."/>
            <person name="Hilbert H."/>
            <person name="Holsappel S."/>
            <person name="Hosono S."/>
            <person name="Hullo M.-F."/>
            <person name="Itaya M."/>
            <person name="Jones L.-M."/>
            <person name="Joris B."/>
            <person name="Karamata D."/>
            <person name="Kasahara Y."/>
            <person name="Klaerr-Blanchard M."/>
            <person name="Klein C."/>
            <person name="Kobayashi Y."/>
            <person name="Koetter P."/>
            <person name="Koningstein G."/>
            <person name="Krogh S."/>
            <person name="Kumano M."/>
            <person name="Kurita K."/>
            <person name="Lapidus A."/>
            <person name="Lardinois S."/>
            <person name="Lauber J."/>
            <person name="Lazarevic V."/>
            <person name="Lee S.-M."/>
            <person name="Levine A."/>
            <person name="Liu H."/>
            <person name="Masuda S."/>
            <person name="Mauel C."/>
            <person name="Medigue C."/>
            <person name="Medina N."/>
            <person name="Mellado R.P."/>
            <person name="Mizuno M."/>
            <person name="Moestl D."/>
            <person name="Nakai S."/>
            <person name="Noback M."/>
            <person name="Noone D."/>
            <person name="O'Reilly M."/>
            <person name="Ogawa K."/>
            <person name="Ogiwara A."/>
            <person name="Oudega B."/>
            <person name="Park S.-H."/>
            <person name="Parro V."/>
            <person name="Pohl T.M."/>
            <person name="Portetelle D."/>
            <person name="Porwollik S."/>
            <person name="Prescott A.M."/>
            <person name="Presecan E."/>
            <person name="Pujic P."/>
            <person name="Purnelle B."/>
            <person name="Rapoport G."/>
            <person name="Rey M."/>
            <person name="Reynolds S."/>
            <person name="Rieger M."/>
            <person name="Rivolta C."/>
            <person name="Rocha E."/>
            <person name="Roche B."/>
            <person name="Rose M."/>
            <person name="Sadaie Y."/>
            <person name="Sato T."/>
            <person name="Scanlan E."/>
            <person name="Schleich S."/>
            <person name="Schroeter R."/>
            <person name="Scoffone F."/>
            <person name="Sekiguchi J."/>
            <person name="Sekowska A."/>
            <person name="Seror S.J."/>
            <person name="Serror P."/>
            <person name="Shin B.-S."/>
            <person name="Soldo B."/>
            <person name="Sorokin A."/>
            <person name="Tacconi E."/>
            <person name="Takagi T."/>
            <person name="Takahashi H."/>
            <person name="Takemaru K."/>
            <person name="Takeuchi M."/>
            <person name="Tamakoshi A."/>
            <person name="Tanaka T."/>
            <person name="Terpstra P."/>
            <person name="Tognoni A."/>
            <person name="Tosato V."/>
            <person name="Uchiyama S."/>
            <person name="Vandenbol M."/>
            <person name="Vannier F."/>
            <person name="Vassarotti A."/>
            <person name="Viari A."/>
            <person name="Wambutt R."/>
            <person name="Wedler E."/>
            <person name="Wedler H."/>
            <person name="Weitzenegger T."/>
            <person name="Winters P."/>
            <person name="Wipat A."/>
            <person name="Yamamoto H."/>
            <person name="Yamane K."/>
            <person name="Yasumoto K."/>
            <person name="Yata K."/>
            <person name="Yoshida K."/>
            <person name="Yoshikawa H.-F."/>
            <person name="Zumstein E."/>
            <person name="Yoshikawa H."/>
            <person name="Danchin A."/>
        </authorList>
    </citation>
    <scope>NUCLEOTIDE SEQUENCE [LARGE SCALE GENOMIC DNA]</scope>
    <source>
        <strain>168</strain>
    </source>
</reference>